<evidence type="ECO:0000250" key="1">
    <source>
        <dbReference type="UniProtKB" id="Q06551"/>
    </source>
</evidence>
<evidence type="ECO:0000250" key="2">
    <source>
        <dbReference type="UniProtKB" id="Q8VDZ4"/>
    </source>
</evidence>
<evidence type="ECO:0000250" key="3">
    <source>
        <dbReference type="UniProtKB" id="Q9UIJ5"/>
    </source>
</evidence>
<evidence type="ECO:0000255" key="4"/>
<evidence type="ECO:0000255" key="5">
    <source>
        <dbReference type="PROSITE-ProRule" id="PRU00067"/>
    </source>
</evidence>
<evidence type="ECO:0000256" key="6">
    <source>
        <dbReference type="SAM" id="MobiDB-lite"/>
    </source>
</evidence>
<evidence type="ECO:0000305" key="7"/>
<feature type="chain" id="PRO_0000212937" description="Palmitoyltransferase ERF2">
    <location>
        <begin position="1"/>
        <end position="367"/>
    </location>
</feature>
<feature type="topological domain" description="Cytoplasmic" evidence="4">
    <location>
        <begin position="1"/>
        <end position="87"/>
    </location>
</feature>
<feature type="transmembrane region" description="Helical" evidence="4">
    <location>
        <begin position="88"/>
        <end position="108"/>
    </location>
</feature>
<feature type="topological domain" description="Lumenal" evidence="4">
    <location>
        <begin position="109"/>
        <end position="121"/>
    </location>
</feature>
<feature type="transmembrane region" description="Helical" evidence="4">
    <location>
        <begin position="122"/>
        <end position="142"/>
    </location>
</feature>
<feature type="topological domain" description="Cytoplasmic" evidence="4">
    <location>
        <begin position="143"/>
        <end position="229"/>
    </location>
</feature>
<feature type="transmembrane region" description="Helical" evidence="4">
    <location>
        <begin position="230"/>
        <end position="250"/>
    </location>
</feature>
<feature type="topological domain" description="Lumenal" evidence="4">
    <location>
        <begin position="251"/>
        <end position="262"/>
    </location>
</feature>
<feature type="transmembrane region" description="Helical" evidence="4">
    <location>
        <begin position="263"/>
        <end position="283"/>
    </location>
</feature>
<feature type="topological domain" description="Cytoplasmic" evidence="4">
    <location>
        <begin position="284"/>
        <end position="367"/>
    </location>
</feature>
<feature type="domain" description="DHHC" evidence="5">
    <location>
        <begin position="185"/>
        <end position="235"/>
    </location>
</feature>
<feature type="region of interest" description="Disordered" evidence="6">
    <location>
        <begin position="1"/>
        <end position="32"/>
    </location>
</feature>
<feature type="compositionally biased region" description="Polar residues" evidence="6">
    <location>
        <begin position="1"/>
        <end position="23"/>
    </location>
</feature>
<feature type="active site" description="S-palmitoyl cysteine intermediate" evidence="2">
    <location>
        <position position="215"/>
    </location>
</feature>
<proteinExistence type="inferred from homology"/>
<keyword id="KW-0012">Acyltransferase</keyword>
<keyword id="KW-0256">Endoplasmic reticulum</keyword>
<keyword id="KW-0449">Lipoprotein</keyword>
<keyword id="KW-0472">Membrane</keyword>
<keyword id="KW-0564">Palmitate</keyword>
<keyword id="KW-1185">Reference proteome</keyword>
<keyword id="KW-0808">Transferase</keyword>
<keyword id="KW-0812">Transmembrane</keyword>
<keyword id="KW-1133">Transmembrane helix</keyword>
<organism>
    <name type="scientific">Eremothecium gossypii (strain ATCC 10895 / CBS 109.51 / FGSC 9923 / NRRL Y-1056)</name>
    <name type="common">Yeast</name>
    <name type="synonym">Ashbya gossypii</name>
    <dbReference type="NCBI Taxonomy" id="284811"/>
    <lineage>
        <taxon>Eukaryota</taxon>
        <taxon>Fungi</taxon>
        <taxon>Dikarya</taxon>
        <taxon>Ascomycota</taxon>
        <taxon>Saccharomycotina</taxon>
        <taxon>Saccharomycetes</taxon>
        <taxon>Saccharomycetales</taxon>
        <taxon>Saccharomycetaceae</taxon>
        <taxon>Eremothecium</taxon>
    </lineage>
</organism>
<gene>
    <name type="primary">ERF2</name>
    <name type="ordered locus">AGL125C</name>
</gene>
<accession>Q750R7</accession>
<dbReference type="EC" id="2.3.1.225" evidence="2"/>
<dbReference type="EMBL" id="AE016820">
    <property type="protein sequence ID" value="AAS54366.1"/>
    <property type="molecule type" value="Genomic_DNA"/>
</dbReference>
<dbReference type="RefSeq" id="NP_986542.1">
    <property type="nucleotide sequence ID" value="NM_211604.1"/>
</dbReference>
<dbReference type="SMR" id="Q750R7"/>
<dbReference type="FunCoup" id="Q750R7">
    <property type="interactions" value="177"/>
</dbReference>
<dbReference type="STRING" id="284811.Q750R7"/>
<dbReference type="EnsemblFungi" id="AAS54366">
    <property type="protein sequence ID" value="AAS54366"/>
    <property type="gene ID" value="AGOS_AGL125C"/>
</dbReference>
<dbReference type="GeneID" id="4622841"/>
<dbReference type="KEGG" id="ago:AGOS_AGL125C"/>
<dbReference type="eggNOG" id="KOG1311">
    <property type="taxonomic scope" value="Eukaryota"/>
</dbReference>
<dbReference type="HOGENOM" id="CLU_047581_0_0_1"/>
<dbReference type="InParanoid" id="Q750R7"/>
<dbReference type="OMA" id="YVTMFLI"/>
<dbReference type="OrthoDB" id="9909019at2759"/>
<dbReference type="Proteomes" id="UP000000591">
    <property type="component" value="Chromosome VII"/>
</dbReference>
<dbReference type="GO" id="GO:0032541">
    <property type="term" value="C:cortical endoplasmic reticulum"/>
    <property type="evidence" value="ECO:0007669"/>
    <property type="project" value="EnsemblFungi"/>
</dbReference>
<dbReference type="GO" id="GO:0005783">
    <property type="term" value="C:endoplasmic reticulum"/>
    <property type="evidence" value="ECO:0000318"/>
    <property type="project" value="GO_Central"/>
</dbReference>
<dbReference type="GO" id="GO:0005789">
    <property type="term" value="C:endoplasmic reticulum membrane"/>
    <property type="evidence" value="ECO:0007669"/>
    <property type="project" value="UniProtKB-SubCell"/>
</dbReference>
<dbReference type="GO" id="GO:0031211">
    <property type="term" value="C:endoplasmic reticulum palmitoyltransferase complex"/>
    <property type="evidence" value="ECO:0007669"/>
    <property type="project" value="EnsemblFungi"/>
</dbReference>
<dbReference type="GO" id="GO:0005794">
    <property type="term" value="C:Golgi apparatus"/>
    <property type="evidence" value="ECO:0000318"/>
    <property type="project" value="GO_Central"/>
</dbReference>
<dbReference type="GO" id="GO:0097038">
    <property type="term" value="C:perinuclear endoplasmic reticulum"/>
    <property type="evidence" value="ECO:0007669"/>
    <property type="project" value="EnsemblFungi"/>
</dbReference>
<dbReference type="GO" id="GO:0019706">
    <property type="term" value="F:protein-cysteine S-palmitoyltransferase activity"/>
    <property type="evidence" value="ECO:0000318"/>
    <property type="project" value="GO_Central"/>
</dbReference>
<dbReference type="GO" id="GO:0006612">
    <property type="term" value="P:protein targeting to membrane"/>
    <property type="evidence" value="ECO:0000318"/>
    <property type="project" value="GO_Central"/>
</dbReference>
<dbReference type="InterPro" id="IPR001594">
    <property type="entry name" value="Palmitoyltrfase_DHHC"/>
</dbReference>
<dbReference type="InterPro" id="IPR039859">
    <property type="entry name" value="PFA4/ZDH16/20/ERF2-like"/>
</dbReference>
<dbReference type="PANTHER" id="PTHR22883:SF43">
    <property type="entry name" value="PALMITOYLTRANSFERASE APP"/>
    <property type="match status" value="1"/>
</dbReference>
<dbReference type="PANTHER" id="PTHR22883">
    <property type="entry name" value="ZINC FINGER DHHC DOMAIN CONTAINING PROTEIN"/>
    <property type="match status" value="1"/>
</dbReference>
<dbReference type="Pfam" id="PF01529">
    <property type="entry name" value="DHHC"/>
    <property type="match status" value="1"/>
</dbReference>
<dbReference type="PROSITE" id="PS50216">
    <property type="entry name" value="DHHC"/>
    <property type="match status" value="1"/>
</dbReference>
<protein>
    <recommendedName>
        <fullName>Palmitoyltransferase ERF2</fullName>
        <ecNumber evidence="2">2.3.1.225</ecNumber>
    </recommendedName>
    <alternativeName>
        <fullName>DHHC cysteine-rich domain-containing protein ERF2</fullName>
    </alternativeName>
    <alternativeName>
        <fullName>Ras protein acyltransferase</fullName>
    </alternativeName>
</protein>
<comment type="function">
    <text evidence="1">The ERF2-ERF4 complex is a palmitoyltransferase specific for Ras proteins.</text>
</comment>
<comment type="catalytic activity">
    <reaction evidence="2">
        <text>L-cysteinyl-[protein] + hexadecanoyl-CoA = S-hexadecanoyl-L-cysteinyl-[protein] + CoA</text>
        <dbReference type="Rhea" id="RHEA:36683"/>
        <dbReference type="Rhea" id="RHEA-COMP:10131"/>
        <dbReference type="Rhea" id="RHEA-COMP:11032"/>
        <dbReference type="ChEBI" id="CHEBI:29950"/>
        <dbReference type="ChEBI" id="CHEBI:57287"/>
        <dbReference type="ChEBI" id="CHEBI:57379"/>
        <dbReference type="ChEBI" id="CHEBI:74151"/>
        <dbReference type="EC" id="2.3.1.225"/>
    </reaction>
</comment>
<comment type="subunit">
    <text evidence="1">Interacts with ERF4.</text>
</comment>
<comment type="subcellular location">
    <subcellularLocation>
        <location evidence="1">Endoplasmic reticulum membrane</location>
        <topology evidence="1">Multi-pass membrane protein</topology>
    </subcellularLocation>
</comment>
<comment type="domain">
    <text evidence="1">The DHHC domain is required for palmitoyltransferase activity.</text>
</comment>
<comment type="PTM">
    <text evidence="3">Autopalmitoylated.</text>
</comment>
<comment type="similarity">
    <text evidence="7">Belongs to the DHHC palmitoyltransferase family. ERF2/ZDHHC9 subfamily.</text>
</comment>
<reference key="1">
    <citation type="journal article" date="2004" name="Science">
        <title>The Ashbya gossypii genome as a tool for mapping the ancient Saccharomyces cerevisiae genome.</title>
        <authorList>
            <person name="Dietrich F.S."/>
            <person name="Voegeli S."/>
            <person name="Brachat S."/>
            <person name="Lerch A."/>
            <person name="Gates K."/>
            <person name="Steiner S."/>
            <person name="Mohr C."/>
            <person name="Poehlmann R."/>
            <person name="Luedi P."/>
            <person name="Choi S."/>
            <person name="Wing R.A."/>
            <person name="Flavier A."/>
            <person name="Gaffney T.D."/>
            <person name="Philippsen P."/>
        </authorList>
    </citation>
    <scope>NUCLEOTIDE SEQUENCE [LARGE SCALE GENOMIC DNA]</scope>
    <source>
        <strain>ATCC 10895 / CBS 109.51 / FGSC 9923 / NRRL Y-1056</strain>
    </source>
</reference>
<reference key="2">
    <citation type="journal article" date="2013" name="G3 (Bethesda)">
        <title>Genomes of Ashbya fungi isolated from insects reveal four mating-type loci, numerous translocations, lack of transposons, and distinct gene duplications.</title>
        <authorList>
            <person name="Dietrich F.S."/>
            <person name="Voegeli S."/>
            <person name="Kuo S."/>
            <person name="Philippsen P."/>
        </authorList>
    </citation>
    <scope>GENOME REANNOTATION</scope>
    <source>
        <strain>ATCC 10895 / CBS 109.51 / FGSC 9923 / NRRL Y-1056</strain>
    </source>
</reference>
<sequence length="367" mass="42039">MRLHSRQASNPHRQYSAAQSLHSSSDDSEHKEIPSTMGWAKRLMRWMVTVDQPHTFETSLKNYQSLAHVTNYIFFCGGRLRTVAKTKYLSVLVLVMLIAPIVLFSVFETGYLWKHVAGAKPCVVLCYYFWTLCFASFISTGATDPGTLPRNIHLAQLQDDYKLPLEYYSIITLPSPVANAPVRLKYCTTCRIWRPPRASHCAVCDSCILSFDHHCDWLNNCIGQRNHRYFLAFLFSSVLSSIWLLTCCALKLRHAGSPSAAPVSLLLICYCAVSIWYPLLLAIYHLFLTGTQQTTHEYLKAVDSRNPIFHKVTHPERNPFVTGSCARNMLLLMCQPRGYDFLHTRSEHQAGDWRFFRLPIPHSFEKV</sequence>
<name>ERFB_EREGS</name>